<reference key="1">
    <citation type="journal article" date="2009" name="PLoS Genet.">
        <title>Organised genome dynamics in the Escherichia coli species results in highly diverse adaptive paths.</title>
        <authorList>
            <person name="Touchon M."/>
            <person name="Hoede C."/>
            <person name="Tenaillon O."/>
            <person name="Barbe V."/>
            <person name="Baeriswyl S."/>
            <person name="Bidet P."/>
            <person name="Bingen E."/>
            <person name="Bonacorsi S."/>
            <person name="Bouchier C."/>
            <person name="Bouvet O."/>
            <person name="Calteau A."/>
            <person name="Chiapello H."/>
            <person name="Clermont O."/>
            <person name="Cruveiller S."/>
            <person name="Danchin A."/>
            <person name="Diard M."/>
            <person name="Dossat C."/>
            <person name="Karoui M.E."/>
            <person name="Frapy E."/>
            <person name="Garry L."/>
            <person name="Ghigo J.M."/>
            <person name="Gilles A.M."/>
            <person name="Johnson J."/>
            <person name="Le Bouguenec C."/>
            <person name="Lescat M."/>
            <person name="Mangenot S."/>
            <person name="Martinez-Jehanne V."/>
            <person name="Matic I."/>
            <person name="Nassif X."/>
            <person name="Oztas S."/>
            <person name="Petit M.A."/>
            <person name="Pichon C."/>
            <person name="Rouy Z."/>
            <person name="Ruf C.S."/>
            <person name="Schneider D."/>
            <person name="Tourret J."/>
            <person name="Vacherie B."/>
            <person name="Vallenet D."/>
            <person name="Medigue C."/>
            <person name="Rocha E.P.C."/>
            <person name="Denamur E."/>
        </authorList>
    </citation>
    <scope>NUCLEOTIDE SEQUENCE [LARGE SCALE GENOMIC DNA]</scope>
    <source>
        <strain>S88 / ExPEC</strain>
    </source>
</reference>
<keyword id="KW-0067">ATP-binding</keyword>
<keyword id="KW-0963">Cytoplasm</keyword>
<keyword id="KW-0275">Fatty acid biosynthesis</keyword>
<keyword id="KW-0276">Fatty acid metabolism</keyword>
<keyword id="KW-0444">Lipid biosynthesis</keyword>
<keyword id="KW-0443">Lipid metabolism</keyword>
<keyword id="KW-0547">Nucleotide-binding</keyword>
<keyword id="KW-1185">Reference proteome</keyword>
<keyword id="KW-0808">Transferase</keyword>
<name>ACCA_ECO45</name>
<organism>
    <name type="scientific">Escherichia coli O45:K1 (strain S88 / ExPEC)</name>
    <dbReference type="NCBI Taxonomy" id="585035"/>
    <lineage>
        <taxon>Bacteria</taxon>
        <taxon>Pseudomonadati</taxon>
        <taxon>Pseudomonadota</taxon>
        <taxon>Gammaproteobacteria</taxon>
        <taxon>Enterobacterales</taxon>
        <taxon>Enterobacteriaceae</taxon>
        <taxon>Escherichia</taxon>
    </lineage>
</organism>
<accession>B7MBG6</accession>
<dbReference type="EC" id="2.1.3.15" evidence="1"/>
<dbReference type="EMBL" id="CU928161">
    <property type="protein sequence ID" value="CAR01560.1"/>
    <property type="molecule type" value="Genomic_DNA"/>
</dbReference>
<dbReference type="RefSeq" id="WP_000055742.1">
    <property type="nucleotide sequence ID" value="NC_011742.1"/>
</dbReference>
<dbReference type="SMR" id="B7MBG6"/>
<dbReference type="KEGG" id="ecz:ECS88_0196"/>
<dbReference type="HOGENOM" id="CLU_015486_0_2_6"/>
<dbReference type="UniPathway" id="UPA00655">
    <property type="reaction ID" value="UER00711"/>
</dbReference>
<dbReference type="Proteomes" id="UP000000747">
    <property type="component" value="Chromosome"/>
</dbReference>
<dbReference type="GO" id="GO:0009317">
    <property type="term" value="C:acetyl-CoA carboxylase complex"/>
    <property type="evidence" value="ECO:0007669"/>
    <property type="project" value="InterPro"/>
</dbReference>
<dbReference type="GO" id="GO:0003989">
    <property type="term" value="F:acetyl-CoA carboxylase activity"/>
    <property type="evidence" value="ECO:0007669"/>
    <property type="project" value="InterPro"/>
</dbReference>
<dbReference type="GO" id="GO:0005524">
    <property type="term" value="F:ATP binding"/>
    <property type="evidence" value="ECO:0007669"/>
    <property type="project" value="UniProtKB-KW"/>
</dbReference>
<dbReference type="GO" id="GO:0016743">
    <property type="term" value="F:carboxyl- or carbamoyltransferase activity"/>
    <property type="evidence" value="ECO:0007669"/>
    <property type="project" value="UniProtKB-UniRule"/>
</dbReference>
<dbReference type="GO" id="GO:0006633">
    <property type="term" value="P:fatty acid biosynthetic process"/>
    <property type="evidence" value="ECO:0007669"/>
    <property type="project" value="UniProtKB-KW"/>
</dbReference>
<dbReference type="GO" id="GO:2001295">
    <property type="term" value="P:malonyl-CoA biosynthetic process"/>
    <property type="evidence" value="ECO:0007669"/>
    <property type="project" value="UniProtKB-UniRule"/>
</dbReference>
<dbReference type="FunFam" id="3.90.226.10:FF:000008">
    <property type="entry name" value="Acetyl-coenzyme A carboxylase carboxyl transferase subunit alpha"/>
    <property type="match status" value="1"/>
</dbReference>
<dbReference type="Gene3D" id="3.90.226.10">
    <property type="entry name" value="2-enoyl-CoA Hydratase, Chain A, domain 1"/>
    <property type="match status" value="1"/>
</dbReference>
<dbReference type="HAMAP" id="MF_00823">
    <property type="entry name" value="AcetylCoA_CT_alpha"/>
    <property type="match status" value="1"/>
</dbReference>
<dbReference type="InterPro" id="IPR001095">
    <property type="entry name" value="Acetyl_CoA_COase_a_su"/>
</dbReference>
<dbReference type="InterPro" id="IPR029045">
    <property type="entry name" value="ClpP/crotonase-like_dom_sf"/>
</dbReference>
<dbReference type="InterPro" id="IPR011763">
    <property type="entry name" value="COA_CT_C"/>
</dbReference>
<dbReference type="NCBIfam" id="TIGR00513">
    <property type="entry name" value="accA"/>
    <property type="match status" value="1"/>
</dbReference>
<dbReference type="NCBIfam" id="NF041504">
    <property type="entry name" value="AccA_sub"/>
    <property type="match status" value="1"/>
</dbReference>
<dbReference type="NCBIfam" id="NF004344">
    <property type="entry name" value="PRK05724.1"/>
    <property type="match status" value="1"/>
</dbReference>
<dbReference type="PANTHER" id="PTHR42853">
    <property type="entry name" value="ACETYL-COENZYME A CARBOXYLASE CARBOXYL TRANSFERASE SUBUNIT ALPHA"/>
    <property type="match status" value="1"/>
</dbReference>
<dbReference type="PANTHER" id="PTHR42853:SF3">
    <property type="entry name" value="ACETYL-COENZYME A CARBOXYLASE CARBOXYL TRANSFERASE SUBUNIT ALPHA, CHLOROPLASTIC"/>
    <property type="match status" value="1"/>
</dbReference>
<dbReference type="Pfam" id="PF03255">
    <property type="entry name" value="ACCA"/>
    <property type="match status" value="1"/>
</dbReference>
<dbReference type="PRINTS" id="PR01069">
    <property type="entry name" value="ACCCTRFRASEA"/>
</dbReference>
<dbReference type="SUPFAM" id="SSF52096">
    <property type="entry name" value="ClpP/crotonase"/>
    <property type="match status" value="1"/>
</dbReference>
<dbReference type="PROSITE" id="PS50989">
    <property type="entry name" value="COA_CT_CTER"/>
    <property type="match status" value="1"/>
</dbReference>
<gene>
    <name evidence="1" type="primary">accA</name>
    <name type="ordered locus">ECS88_0196</name>
</gene>
<feature type="chain" id="PRO_1000134482" description="Acetyl-coenzyme A carboxylase carboxyl transferase subunit alpha">
    <location>
        <begin position="1"/>
        <end position="319"/>
    </location>
</feature>
<feature type="domain" description="CoA carboxyltransferase C-terminal" evidence="2">
    <location>
        <begin position="35"/>
        <end position="296"/>
    </location>
</feature>
<protein>
    <recommendedName>
        <fullName evidence="1">Acetyl-coenzyme A carboxylase carboxyl transferase subunit alpha</fullName>
        <shortName evidence="1">ACCase subunit alpha</shortName>
        <shortName evidence="1">Acetyl-CoA carboxylase carboxyltransferase subunit alpha</shortName>
        <ecNumber evidence="1">2.1.3.15</ecNumber>
    </recommendedName>
</protein>
<proteinExistence type="inferred from homology"/>
<comment type="function">
    <text evidence="1">Component of the acetyl coenzyme A carboxylase (ACC) complex. First, biotin carboxylase catalyzes the carboxylation of biotin on its carrier protein (BCCP) and then the CO(2) group is transferred by the carboxyltransferase to acetyl-CoA to form malonyl-CoA.</text>
</comment>
<comment type="catalytic activity">
    <reaction evidence="1">
        <text>N(6)-carboxybiotinyl-L-lysyl-[protein] + acetyl-CoA = N(6)-biotinyl-L-lysyl-[protein] + malonyl-CoA</text>
        <dbReference type="Rhea" id="RHEA:54728"/>
        <dbReference type="Rhea" id="RHEA-COMP:10505"/>
        <dbReference type="Rhea" id="RHEA-COMP:10506"/>
        <dbReference type="ChEBI" id="CHEBI:57288"/>
        <dbReference type="ChEBI" id="CHEBI:57384"/>
        <dbReference type="ChEBI" id="CHEBI:83144"/>
        <dbReference type="ChEBI" id="CHEBI:83145"/>
        <dbReference type="EC" id="2.1.3.15"/>
    </reaction>
</comment>
<comment type="pathway">
    <text evidence="1">Lipid metabolism; malonyl-CoA biosynthesis; malonyl-CoA from acetyl-CoA: step 1/1.</text>
</comment>
<comment type="subunit">
    <text evidence="1">Acetyl-CoA carboxylase is a heterohexamer composed of biotin carboxyl carrier protein (AccB), biotin carboxylase (AccC) and two subunits each of ACCase subunit alpha (AccA) and ACCase subunit beta (AccD).</text>
</comment>
<comment type="subcellular location">
    <subcellularLocation>
        <location evidence="1">Cytoplasm</location>
    </subcellularLocation>
</comment>
<comment type="similarity">
    <text evidence="1">Belongs to the AccA family.</text>
</comment>
<evidence type="ECO:0000255" key="1">
    <source>
        <dbReference type="HAMAP-Rule" id="MF_00823"/>
    </source>
</evidence>
<evidence type="ECO:0000255" key="2">
    <source>
        <dbReference type="PROSITE-ProRule" id="PRU01137"/>
    </source>
</evidence>
<sequence>MSLNFLDFEQPIAELEAKIDSLTAVSRQDEKLDINIDEEVHRLREKSVELTRKIFADLGAWQIAQLARHPQRPYTLDYVRLAFDEFDELAGDRAYADDKAIVGGIARLDGRPVMIIGHQKGRETKEKIRRNFGMPAPEGYRKALRLMQMAERFKMPIITFIDTPGAYPGVGAEERGQSEAIARNLREMSRLGVPVVCTVIGEGGSGGALAIGVGDKVNMLQYSTYSVISPEGCASILWKSADKAPLAAEAMGIIAPRLKELKLIDSIIPEPLGGAHRNPEAMAASLKAQLLTDLADLDVLSTEDLKNRRYQRLMSYGYA</sequence>